<evidence type="ECO:0000256" key="1">
    <source>
        <dbReference type="SAM" id="MobiDB-lite"/>
    </source>
</evidence>
<evidence type="ECO:0000305" key="2"/>
<name>OSP4_PEA</name>
<protein>
    <recommendedName>
        <fullName>Organ-specific protein P4</fullName>
    </recommendedName>
</protein>
<dbReference type="EMBL" id="X51594">
    <property type="protein sequence ID" value="CAA35943.1"/>
    <property type="molecule type" value="Genomic_DNA"/>
</dbReference>
<dbReference type="PIR" id="S11874">
    <property type="entry name" value="KNPMP4"/>
</dbReference>
<dbReference type="InterPro" id="IPR024489">
    <property type="entry name" value="Organ_specific_prot"/>
</dbReference>
<dbReference type="PANTHER" id="PTHR33731:SF9">
    <property type="entry name" value="ORGAN SPECIFIC PROTEIN-RELATED"/>
    <property type="match status" value="1"/>
</dbReference>
<dbReference type="PANTHER" id="PTHR33731">
    <property type="entry name" value="PROTEIN, PUTATIVE-RELATED"/>
    <property type="match status" value="1"/>
</dbReference>
<dbReference type="Pfam" id="PF10950">
    <property type="entry name" value="Organ_specific"/>
    <property type="match status" value="1"/>
</dbReference>
<feature type="chain" id="PRO_0000058088" description="Organ-specific protein P4">
    <location>
        <begin position="1"/>
        <end position="130"/>
    </location>
</feature>
<feature type="repeat" description="1">
    <location>
        <begin position="60"/>
        <end position="85"/>
    </location>
</feature>
<feature type="repeat" description="2">
    <location>
        <begin position="86"/>
        <end position="111"/>
    </location>
</feature>
<feature type="region of interest" description="2 X 26 AA tandem repeats">
    <location>
        <begin position="60"/>
        <end position="111"/>
    </location>
</feature>
<feature type="region of interest" description="Disordered" evidence="1">
    <location>
        <begin position="79"/>
        <end position="130"/>
    </location>
</feature>
<proteinExistence type="evidence at transcript level"/>
<organism>
    <name type="scientific">Pisum sativum</name>
    <name type="common">Garden pea</name>
    <name type="synonym">Lathyrus oleraceus</name>
    <dbReference type="NCBI Taxonomy" id="3888"/>
    <lineage>
        <taxon>Eukaryota</taxon>
        <taxon>Viridiplantae</taxon>
        <taxon>Streptophyta</taxon>
        <taxon>Embryophyta</taxon>
        <taxon>Tracheophyta</taxon>
        <taxon>Spermatophyta</taxon>
        <taxon>Magnoliopsida</taxon>
        <taxon>eudicotyledons</taxon>
        <taxon>Gunneridae</taxon>
        <taxon>Pentapetalae</taxon>
        <taxon>rosids</taxon>
        <taxon>fabids</taxon>
        <taxon>Fabales</taxon>
        <taxon>Fabaceae</taxon>
        <taxon>Papilionoideae</taxon>
        <taxon>50 kb inversion clade</taxon>
        <taxon>NPAAA clade</taxon>
        <taxon>Hologalegina</taxon>
        <taxon>IRL clade</taxon>
        <taxon>Fabeae</taxon>
        <taxon>Pisum</taxon>
    </lineage>
</organism>
<accession>P17771</accession>
<reference key="1">
    <citation type="journal article" date="1990" name="Plant Mol. Biol.">
        <title>Differential expression of two related organ-specific genes in pea.</title>
        <authorList>
            <person name="Williams M.E."/>
            <person name="Mundy J."/>
            <person name="Kay S.A."/>
            <person name="Chua N.H."/>
        </authorList>
    </citation>
    <scope>NUCLEOTIDE SEQUENCE [GENOMIC DNA]</scope>
    <source>
        <strain>cv. Feltham First</strain>
        <tissue>Pod</tissue>
    </source>
</reference>
<sequence length="130" mass="14421">MMSLRSAFALLPLFLFLIVANVESRKDVGEYWKLVMKDQDMPEEIQGLLDASNIKNSKTHAKENKGAIGEFEPCPNASAYGDNEIHANENKGAIGEFETRPNGSAYGDNEIGAEFTDDFEPRPSMTKYNA</sequence>
<keyword id="KW-0677">Repeat</keyword>
<comment type="tissue specificity">
    <text>Expressed in pods.</text>
</comment>
<comment type="similarity">
    <text evidence="2">To organ specific protein S2.</text>
</comment>